<dbReference type="EC" id="3.4.24.84" evidence="1"/>
<dbReference type="EMBL" id="AAFI02000171">
    <property type="protein sequence ID" value="EAL62019.1"/>
    <property type="molecule type" value="Genomic_DNA"/>
</dbReference>
<dbReference type="RefSeq" id="XP_635524.1">
    <property type="nucleotide sequence ID" value="XM_630432.1"/>
</dbReference>
<dbReference type="SMR" id="Q54FH7"/>
<dbReference type="FunCoup" id="Q54FH7">
    <property type="interactions" value="727"/>
</dbReference>
<dbReference type="STRING" id="44689.Q54FH7"/>
<dbReference type="MEROPS" id="M48.A08"/>
<dbReference type="PaxDb" id="44689-DDB0237846"/>
<dbReference type="EnsemblProtists" id="EAL62019">
    <property type="protein sequence ID" value="EAL62019"/>
    <property type="gene ID" value="DDB_G0290849"/>
</dbReference>
<dbReference type="GeneID" id="8627861"/>
<dbReference type="KEGG" id="ddi:DDB_G0290849"/>
<dbReference type="dictyBase" id="DDB_G0290849">
    <property type="gene designation" value="zmpste24"/>
</dbReference>
<dbReference type="VEuPathDB" id="AmoebaDB:DDB_G0290849"/>
<dbReference type="eggNOG" id="KOG2719">
    <property type="taxonomic scope" value="Eukaryota"/>
</dbReference>
<dbReference type="HOGENOM" id="CLU_025947_3_3_1"/>
<dbReference type="InParanoid" id="Q54FH7"/>
<dbReference type="OMA" id="HWHYSHI"/>
<dbReference type="PhylomeDB" id="Q54FH7"/>
<dbReference type="PRO" id="PR:Q54FH7"/>
<dbReference type="Proteomes" id="UP000002195">
    <property type="component" value="Chromosome 5"/>
</dbReference>
<dbReference type="GO" id="GO:0005789">
    <property type="term" value="C:endoplasmic reticulum membrane"/>
    <property type="evidence" value="ECO:0000318"/>
    <property type="project" value="GO_Central"/>
</dbReference>
<dbReference type="GO" id="GO:0046872">
    <property type="term" value="F:metal ion binding"/>
    <property type="evidence" value="ECO:0007669"/>
    <property type="project" value="UniProtKB-KW"/>
</dbReference>
<dbReference type="GO" id="GO:0004222">
    <property type="term" value="F:metalloendopeptidase activity"/>
    <property type="evidence" value="ECO:0000250"/>
    <property type="project" value="dictyBase"/>
</dbReference>
<dbReference type="GO" id="GO:0071586">
    <property type="term" value="P:CAAX-box protein processing"/>
    <property type="evidence" value="ECO:0000318"/>
    <property type="project" value="GO_Central"/>
</dbReference>
<dbReference type="CDD" id="cd07343">
    <property type="entry name" value="M48A_Zmpste24p_like"/>
    <property type="match status" value="1"/>
</dbReference>
<dbReference type="FunFam" id="3.30.2010.10:FF:000002">
    <property type="entry name" value="CAAX prenyl protease"/>
    <property type="match status" value="1"/>
</dbReference>
<dbReference type="Gene3D" id="3.30.2010.10">
    <property type="entry name" value="Metalloproteases ('zincins'), catalytic domain"/>
    <property type="match status" value="1"/>
</dbReference>
<dbReference type="InterPro" id="IPR027057">
    <property type="entry name" value="CAXX_Prtase_1"/>
</dbReference>
<dbReference type="InterPro" id="IPR001915">
    <property type="entry name" value="Peptidase_M48"/>
</dbReference>
<dbReference type="InterPro" id="IPR032456">
    <property type="entry name" value="Peptidase_M48_N"/>
</dbReference>
<dbReference type="PANTHER" id="PTHR10120">
    <property type="entry name" value="CAAX PRENYL PROTEASE 1"/>
    <property type="match status" value="1"/>
</dbReference>
<dbReference type="Pfam" id="PF01435">
    <property type="entry name" value="Peptidase_M48"/>
    <property type="match status" value="1"/>
</dbReference>
<dbReference type="Pfam" id="PF16491">
    <property type="entry name" value="Peptidase_M48_N"/>
    <property type="match status" value="1"/>
</dbReference>
<organism>
    <name type="scientific">Dictyostelium discoideum</name>
    <name type="common">Social amoeba</name>
    <dbReference type="NCBI Taxonomy" id="44689"/>
    <lineage>
        <taxon>Eukaryota</taxon>
        <taxon>Amoebozoa</taxon>
        <taxon>Evosea</taxon>
        <taxon>Eumycetozoa</taxon>
        <taxon>Dictyostelia</taxon>
        <taxon>Dictyosteliales</taxon>
        <taxon>Dictyosteliaceae</taxon>
        <taxon>Dictyostelium</taxon>
    </lineage>
</organism>
<protein>
    <recommendedName>
        <fullName>CAAX prenyl protease 1 homolog</fullName>
        <ecNumber evidence="1">3.4.24.84</ecNumber>
    </recommendedName>
    <alternativeName>
        <fullName>Prenyl protein-specific endoprotease 1</fullName>
    </alternativeName>
</protein>
<evidence type="ECO:0000250" key="1">
    <source>
        <dbReference type="UniProtKB" id="O75844"/>
    </source>
</evidence>
<evidence type="ECO:0000255" key="2"/>
<evidence type="ECO:0000305" key="3"/>
<gene>
    <name type="primary">zmpste24</name>
    <name type="ORF">DDB_G0290849</name>
</gene>
<proteinExistence type="inferred from homology"/>
<accession>Q54FH7</accession>
<keyword id="KW-0256">Endoplasmic reticulum</keyword>
<keyword id="KW-0378">Hydrolase</keyword>
<keyword id="KW-0472">Membrane</keyword>
<keyword id="KW-0479">Metal-binding</keyword>
<keyword id="KW-0482">Metalloprotease</keyword>
<keyword id="KW-0645">Protease</keyword>
<keyword id="KW-1185">Reference proteome</keyword>
<keyword id="KW-0812">Transmembrane</keyword>
<keyword id="KW-1133">Transmembrane helix</keyword>
<keyword id="KW-0862">Zinc</keyword>
<name>FACE1_DICDI</name>
<comment type="function">
    <text evidence="1">Proteolytically removes the C-terminal three residues of farnesylated proteins.</text>
</comment>
<comment type="catalytic activity">
    <reaction evidence="1">
        <text>Hydrolyzes the peptide bond -P2-(S-farnesyl or geranylgeranyl)C-P1'-P2'-P3'-COOH where P1' and P2' are amino acids with aliphatic side chains and P3' is any C-terminal residue.</text>
        <dbReference type="EC" id="3.4.24.84"/>
    </reaction>
</comment>
<comment type="cofactor">
    <cofactor evidence="1">
        <name>Zn(2+)</name>
        <dbReference type="ChEBI" id="CHEBI:29105"/>
    </cofactor>
    <text evidence="1">Binds 1 zinc ion per subunit.</text>
</comment>
<comment type="subcellular location">
    <subcellularLocation>
        <location evidence="1">Endoplasmic reticulum membrane</location>
        <topology evidence="2">Multi-pass membrane protein</topology>
    </subcellularLocation>
</comment>
<comment type="similarity">
    <text evidence="3">Belongs to the peptidase M48B family.</text>
</comment>
<feature type="chain" id="PRO_0000328899" description="CAAX prenyl protease 1 homolog">
    <location>
        <begin position="1"/>
        <end position="426"/>
    </location>
</feature>
<feature type="topological domain" description="Lumenal" evidence="2">
    <location>
        <begin position="1"/>
        <end position="3"/>
    </location>
</feature>
<feature type="transmembrane region" description="Helical" evidence="2">
    <location>
        <begin position="4"/>
        <end position="24"/>
    </location>
</feature>
<feature type="topological domain" description="Cytoplasmic" evidence="2">
    <location>
        <begin position="25"/>
        <end position="70"/>
    </location>
</feature>
<feature type="transmembrane region" description="Helical" evidence="2">
    <location>
        <begin position="71"/>
        <end position="91"/>
    </location>
</feature>
<feature type="topological domain" description="Lumenal" evidence="2">
    <location>
        <begin position="92"/>
        <end position="106"/>
    </location>
</feature>
<feature type="transmembrane region" description="Helical" evidence="2">
    <location>
        <begin position="107"/>
        <end position="127"/>
    </location>
</feature>
<feature type="topological domain" description="Cytoplasmic" evidence="2">
    <location>
        <begin position="128"/>
        <end position="150"/>
    </location>
</feature>
<feature type="transmembrane region" description="Helical" evidence="2">
    <location>
        <begin position="151"/>
        <end position="171"/>
    </location>
</feature>
<feature type="topological domain" description="Lumenal" evidence="2">
    <location>
        <begin position="172"/>
        <end position="178"/>
    </location>
</feature>
<feature type="transmembrane region" description="Helical" evidence="2">
    <location>
        <begin position="179"/>
        <end position="199"/>
    </location>
</feature>
<feature type="topological domain" description="Cytoplasmic" evidence="2">
    <location>
        <begin position="200"/>
        <end position="294"/>
    </location>
</feature>
<feature type="transmembrane region" description="Helical" evidence="2">
    <location>
        <begin position="295"/>
        <end position="315"/>
    </location>
</feature>
<feature type="topological domain" description="Lumenal" evidence="2">
    <location>
        <begin position="316"/>
        <end position="333"/>
    </location>
</feature>
<feature type="transmembrane region" description="Helical" evidence="2">
    <location>
        <begin position="334"/>
        <end position="354"/>
    </location>
</feature>
<feature type="topological domain" description="Cytoplasmic" evidence="2">
    <location>
        <begin position="355"/>
        <end position="426"/>
    </location>
</feature>
<feature type="active site" evidence="1">
    <location>
        <position position="283"/>
    </location>
</feature>
<feature type="binding site" evidence="1">
    <location>
        <position position="282"/>
    </location>
    <ligand>
        <name>Zn(2+)</name>
        <dbReference type="ChEBI" id="CHEBI:29105"/>
        <note>catalytic</note>
    </ligand>
</feature>
<feature type="binding site" evidence="1">
    <location>
        <position position="286"/>
    </location>
    <ligand>
        <name>Zn(2+)</name>
        <dbReference type="ChEBI" id="CHEBI:29105"/>
        <note>catalytic</note>
    </ligand>
</feature>
<feature type="binding site" evidence="1">
    <location>
        <position position="362"/>
    </location>
    <ligand>
        <name>Zn(2+)</name>
        <dbReference type="ChEBI" id="CHEBI:29105"/>
        <note>catalytic</note>
    </ligand>
</feature>
<sequence length="426" mass="49930">MVNYFIISISFFLLEHFYSFYLNFRQSKLLKNLTKVPEYCKDRITQEDFKKSQEYSKAKLDYKTLTSTIQVLTTLLSFYYPVYPYFWNLSLELAEKIGYPNEIIRSCFFFAFTVGVSVITEIPFSYYYQFILEEKFGYNRMTRTLFIKDKIISTLLMIGFGLPILSLAIFIINWSGPQLWFYCWLLLVAITLLSITIYPTFIQPLFNKFTPVDGELAESIFALAKRVGFPASKDTIFVVDNSKRDGHMNAYFYGLFGTKRIVLYDTLVNELDKEELLAVMGHEFGHYKMSHTLKQMLLVQVHLVTLLYAFSLLINDDQLYQQFGFVSSKDSVLVGLTLFMFLYSPIDRIFSLLINIFSRKYEFQADDFAVELGFLNSNHLFKLHFKELGCLVYDPLYSAYHHSHPTLVERSNNIDKKVALYKLKNK</sequence>
<reference key="1">
    <citation type="journal article" date="2005" name="Nature">
        <title>The genome of the social amoeba Dictyostelium discoideum.</title>
        <authorList>
            <person name="Eichinger L."/>
            <person name="Pachebat J.A."/>
            <person name="Gloeckner G."/>
            <person name="Rajandream M.A."/>
            <person name="Sucgang R."/>
            <person name="Berriman M."/>
            <person name="Song J."/>
            <person name="Olsen R."/>
            <person name="Szafranski K."/>
            <person name="Xu Q."/>
            <person name="Tunggal B."/>
            <person name="Kummerfeld S."/>
            <person name="Madera M."/>
            <person name="Konfortov B.A."/>
            <person name="Rivero F."/>
            <person name="Bankier A.T."/>
            <person name="Lehmann R."/>
            <person name="Hamlin N."/>
            <person name="Davies R."/>
            <person name="Gaudet P."/>
            <person name="Fey P."/>
            <person name="Pilcher K."/>
            <person name="Chen G."/>
            <person name="Saunders D."/>
            <person name="Sodergren E.J."/>
            <person name="Davis P."/>
            <person name="Kerhornou A."/>
            <person name="Nie X."/>
            <person name="Hall N."/>
            <person name="Anjard C."/>
            <person name="Hemphill L."/>
            <person name="Bason N."/>
            <person name="Farbrother P."/>
            <person name="Desany B."/>
            <person name="Just E."/>
            <person name="Morio T."/>
            <person name="Rost R."/>
            <person name="Churcher C.M."/>
            <person name="Cooper J."/>
            <person name="Haydock S."/>
            <person name="van Driessche N."/>
            <person name="Cronin A."/>
            <person name="Goodhead I."/>
            <person name="Muzny D.M."/>
            <person name="Mourier T."/>
            <person name="Pain A."/>
            <person name="Lu M."/>
            <person name="Harper D."/>
            <person name="Lindsay R."/>
            <person name="Hauser H."/>
            <person name="James K.D."/>
            <person name="Quiles M."/>
            <person name="Madan Babu M."/>
            <person name="Saito T."/>
            <person name="Buchrieser C."/>
            <person name="Wardroper A."/>
            <person name="Felder M."/>
            <person name="Thangavelu M."/>
            <person name="Johnson D."/>
            <person name="Knights A."/>
            <person name="Loulseged H."/>
            <person name="Mungall K.L."/>
            <person name="Oliver K."/>
            <person name="Price C."/>
            <person name="Quail M.A."/>
            <person name="Urushihara H."/>
            <person name="Hernandez J."/>
            <person name="Rabbinowitsch E."/>
            <person name="Steffen D."/>
            <person name="Sanders M."/>
            <person name="Ma J."/>
            <person name="Kohara Y."/>
            <person name="Sharp S."/>
            <person name="Simmonds M.N."/>
            <person name="Spiegler S."/>
            <person name="Tivey A."/>
            <person name="Sugano S."/>
            <person name="White B."/>
            <person name="Walker D."/>
            <person name="Woodward J.R."/>
            <person name="Winckler T."/>
            <person name="Tanaka Y."/>
            <person name="Shaulsky G."/>
            <person name="Schleicher M."/>
            <person name="Weinstock G.M."/>
            <person name="Rosenthal A."/>
            <person name="Cox E.C."/>
            <person name="Chisholm R.L."/>
            <person name="Gibbs R.A."/>
            <person name="Loomis W.F."/>
            <person name="Platzer M."/>
            <person name="Kay R.R."/>
            <person name="Williams J.G."/>
            <person name="Dear P.H."/>
            <person name="Noegel A.A."/>
            <person name="Barrell B.G."/>
            <person name="Kuspa A."/>
        </authorList>
    </citation>
    <scope>NUCLEOTIDE SEQUENCE [LARGE SCALE GENOMIC DNA]</scope>
    <source>
        <strain>AX4</strain>
    </source>
</reference>